<dbReference type="EC" id="7.1.1.-" evidence="1"/>
<dbReference type="EMBL" id="BX248583">
    <property type="protein sequence ID" value="CAD83170.1"/>
    <property type="molecule type" value="Genomic_DNA"/>
</dbReference>
<dbReference type="SMR" id="Q7VRW4"/>
<dbReference type="STRING" id="203907.Bfl481"/>
<dbReference type="KEGG" id="bfl:Bfl481"/>
<dbReference type="eggNOG" id="COG1007">
    <property type="taxonomic scope" value="Bacteria"/>
</dbReference>
<dbReference type="HOGENOM" id="CLU_007100_1_5_6"/>
<dbReference type="OrthoDB" id="9768329at2"/>
<dbReference type="Proteomes" id="UP000002192">
    <property type="component" value="Chromosome"/>
</dbReference>
<dbReference type="GO" id="GO:0005886">
    <property type="term" value="C:plasma membrane"/>
    <property type="evidence" value="ECO:0007669"/>
    <property type="project" value="UniProtKB-SubCell"/>
</dbReference>
<dbReference type="GO" id="GO:0008137">
    <property type="term" value="F:NADH dehydrogenase (ubiquinone) activity"/>
    <property type="evidence" value="ECO:0007669"/>
    <property type="project" value="InterPro"/>
</dbReference>
<dbReference type="GO" id="GO:0050136">
    <property type="term" value="F:NADH:ubiquinone reductase (non-electrogenic) activity"/>
    <property type="evidence" value="ECO:0007669"/>
    <property type="project" value="UniProtKB-UniRule"/>
</dbReference>
<dbReference type="GO" id="GO:0048038">
    <property type="term" value="F:quinone binding"/>
    <property type="evidence" value="ECO:0007669"/>
    <property type="project" value="UniProtKB-KW"/>
</dbReference>
<dbReference type="GO" id="GO:0042773">
    <property type="term" value="P:ATP synthesis coupled electron transport"/>
    <property type="evidence" value="ECO:0007669"/>
    <property type="project" value="InterPro"/>
</dbReference>
<dbReference type="HAMAP" id="MF_00445">
    <property type="entry name" value="NDH1_NuoN_1"/>
    <property type="match status" value="1"/>
</dbReference>
<dbReference type="InterPro" id="IPR010096">
    <property type="entry name" value="NADH-Q_OxRdtase_suN/2"/>
</dbReference>
<dbReference type="InterPro" id="IPR001750">
    <property type="entry name" value="ND/Mrp_TM"/>
</dbReference>
<dbReference type="NCBIfam" id="TIGR01770">
    <property type="entry name" value="NDH_I_N"/>
    <property type="match status" value="1"/>
</dbReference>
<dbReference type="PANTHER" id="PTHR22773">
    <property type="entry name" value="NADH DEHYDROGENASE"/>
    <property type="match status" value="1"/>
</dbReference>
<dbReference type="Pfam" id="PF00361">
    <property type="entry name" value="Proton_antipo_M"/>
    <property type="match status" value="1"/>
</dbReference>
<name>NUON_BLOFL</name>
<evidence type="ECO:0000255" key="1">
    <source>
        <dbReference type="HAMAP-Rule" id="MF_00445"/>
    </source>
</evidence>
<protein>
    <recommendedName>
        <fullName evidence="1">NADH-quinone oxidoreductase subunit N</fullName>
        <ecNumber evidence="1">7.1.1.-</ecNumber>
    </recommendedName>
    <alternativeName>
        <fullName evidence="1">NADH dehydrogenase I subunit N</fullName>
    </alternativeName>
    <alternativeName>
        <fullName evidence="1">NDH-1 subunit N</fullName>
    </alternativeName>
</protein>
<accession>Q7VRW4</accession>
<proteinExistence type="inferred from homology"/>
<keyword id="KW-0997">Cell inner membrane</keyword>
<keyword id="KW-1003">Cell membrane</keyword>
<keyword id="KW-0472">Membrane</keyword>
<keyword id="KW-0520">NAD</keyword>
<keyword id="KW-0874">Quinone</keyword>
<keyword id="KW-1185">Reference proteome</keyword>
<keyword id="KW-1278">Translocase</keyword>
<keyword id="KW-0812">Transmembrane</keyword>
<keyword id="KW-1133">Transmembrane helix</keyword>
<keyword id="KW-0813">Transport</keyword>
<keyword id="KW-0830">Ubiquinone</keyword>
<sequence length="504" mass="56776">MIIFREQLIALLPIIVIGITIVGIMLSIIYSRNQFKHAVLTIIGMIIASVSSLLHMMWSMNKSGQNFFQLICIDNFSVLYVILIMFVGIASSILGYVWLVYYPVYRSDEFYLLLLIASIGGILLVITNHLIVLFLGIELISISICGLISYPVFSKKSIELSIKYIILSGVSSSFLLFGIVFIYCKTGSLSFIDIKEILSTYNNVNHMLSQPSMTLIVIGLSMMMIGMGFKLSCVPFHLWISDIYQGTPTAVSMYLATGSKIAVTAVLMRFLLILPDQYNELLHIFLSVSACCSMLFGSLMAIPQISIKRMLAYSSITNAGYLLIALIALRMNNCAIIQESISVYLVSYLFANVGVWGIVNIVSTAYIQKEKNDADTIYLYHGLFWREPMLSVIFVIAILSLAGIPMTFGFIGKFYLLFIGISNQLWFLTVMMIISSIISMFYYLKIITNLFNSNFVNNTNINYDILKKWMIKPEGFMVIIVAIIILFFGVYPQFIVNLIQQFVI</sequence>
<gene>
    <name evidence="1" type="primary">nuoN</name>
    <name type="ordered locus">Bfl481</name>
</gene>
<feature type="chain" id="PRO_0000391112" description="NADH-quinone oxidoreductase subunit N">
    <location>
        <begin position="1"/>
        <end position="504"/>
    </location>
</feature>
<feature type="transmembrane region" description="Helical" evidence="1">
    <location>
        <begin position="9"/>
        <end position="29"/>
    </location>
</feature>
<feature type="transmembrane region" description="Helical" evidence="1">
    <location>
        <begin position="38"/>
        <end position="58"/>
    </location>
</feature>
<feature type="transmembrane region" description="Helical" evidence="1">
    <location>
        <begin position="78"/>
        <end position="98"/>
    </location>
</feature>
<feature type="transmembrane region" description="Helical" evidence="1">
    <location>
        <begin position="114"/>
        <end position="134"/>
    </location>
</feature>
<feature type="transmembrane region" description="Helical" evidence="1">
    <location>
        <begin position="135"/>
        <end position="155"/>
    </location>
</feature>
<feature type="transmembrane region" description="Helical" evidence="1">
    <location>
        <begin position="164"/>
        <end position="184"/>
    </location>
</feature>
<feature type="transmembrane region" description="Helical" evidence="1">
    <location>
        <begin position="216"/>
        <end position="236"/>
    </location>
</feature>
<feature type="transmembrane region" description="Helical" evidence="1">
    <location>
        <begin position="254"/>
        <end position="274"/>
    </location>
</feature>
<feature type="transmembrane region" description="Helical" evidence="1">
    <location>
        <begin position="282"/>
        <end position="302"/>
    </location>
</feature>
<feature type="transmembrane region" description="Helical" evidence="1">
    <location>
        <begin position="309"/>
        <end position="329"/>
    </location>
</feature>
<feature type="transmembrane region" description="Helical" evidence="1">
    <location>
        <begin position="341"/>
        <end position="361"/>
    </location>
</feature>
<feature type="transmembrane region" description="Helical" evidence="1">
    <location>
        <begin position="392"/>
        <end position="412"/>
    </location>
</feature>
<feature type="transmembrane region" description="Helical" evidence="1">
    <location>
        <begin position="425"/>
        <end position="447"/>
    </location>
</feature>
<feature type="transmembrane region" description="Helical" evidence="1">
    <location>
        <begin position="476"/>
        <end position="496"/>
    </location>
</feature>
<comment type="function">
    <text evidence="1">NDH-1 shuttles electrons from NADH, via FMN and iron-sulfur (Fe-S) centers, to quinones in the respiratory chain. The immediate electron acceptor for the enzyme in this species is believed to be ubiquinone. Couples the redox reaction to proton translocation (for every two electrons transferred, four hydrogen ions are translocated across the cytoplasmic membrane), and thus conserves the redox energy in a proton gradient.</text>
</comment>
<comment type="catalytic activity">
    <reaction evidence="1">
        <text>a quinone + NADH + 5 H(+)(in) = a quinol + NAD(+) + 4 H(+)(out)</text>
        <dbReference type="Rhea" id="RHEA:57888"/>
        <dbReference type="ChEBI" id="CHEBI:15378"/>
        <dbReference type="ChEBI" id="CHEBI:24646"/>
        <dbReference type="ChEBI" id="CHEBI:57540"/>
        <dbReference type="ChEBI" id="CHEBI:57945"/>
        <dbReference type="ChEBI" id="CHEBI:132124"/>
    </reaction>
</comment>
<comment type="subunit">
    <text evidence="1">NDH-1 is composed of 13 different subunits. Subunits NuoA, H, J, K, L, M, N constitute the membrane sector of the complex.</text>
</comment>
<comment type="subcellular location">
    <subcellularLocation>
        <location evidence="1">Cell inner membrane</location>
        <topology evidence="1">Multi-pass membrane protein</topology>
    </subcellularLocation>
</comment>
<comment type="similarity">
    <text evidence="1">Belongs to the complex I subunit 2 family.</text>
</comment>
<reference key="1">
    <citation type="journal article" date="2003" name="Proc. Natl. Acad. Sci. U.S.A.">
        <title>The genome sequence of Blochmannia floridanus: comparative analysis of reduced genomes.</title>
        <authorList>
            <person name="Gil R."/>
            <person name="Silva F.J."/>
            <person name="Zientz E."/>
            <person name="Delmotte F."/>
            <person name="Gonzalez-Candelas F."/>
            <person name="Latorre A."/>
            <person name="Rausell C."/>
            <person name="Kamerbeek J."/>
            <person name="Gadau J."/>
            <person name="Hoelldobler B."/>
            <person name="van Ham R.C.H.J."/>
            <person name="Gross R."/>
            <person name="Moya A."/>
        </authorList>
    </citation>
    <scope>NUCLEOTIDE SEQUENCE [LARGE SCALE GENOMIC DNA]</scope>
</reference>
<organism>
    <name type="scientific">Blochmanniella floridana</name>
    <dbReference type="NCBI Taxonomy" id="203907"/>
    <lineage>
        <taxon>Bacteria</taxon>
        <taxon>Pseudomonadati</taxon>
        <taxon>Pseudomonadota</taxon>
        <taxon>Gammaproteobacteria</taxon>
        <taxon>Enterobacterales</taxon>
        <taxon>Enterobacteriaceae</taxon>
        <taxon>ant endosymbionts</taxon>
        <taxon>Candidatus Blochmanniella</taxon>
    </lineage>
</organism>